<keyword id="KW-0067">ATP-binding</keyword>
<keyword id="KW-0963">Cytoplasm</keyword>
<keyword id="KW-0418">Kinase</keyword>
<keyword id="KW-0460">Magnesium</keyword>
<keyword id="KW-0479">Metal-binding</keyword>
<keyword id="KW-0546">Nucleotide metabolism</keyword>
<keyword id="KW-0547">Nucleotide-binding</keyword>
<keyword id="KW-0597">Phosphoprotein</keyword>
<keyword id="KW-1185">Reference proteome</keyword>
<keyword id="KW-0808">Transferase</keyword>
<reference key="1">
    <citation type="journal article" date="2010" name="J. Bacteriol.">
        <title>The genetic basis of laboratory adaptation in Caulobacter crescentus.</title>
        <authorList>
            <person name="Marks M.E."/>
            <person name="Castro-Rojas C.M."/>
            <person name="Teiling C."/>
            <person name="Du L."/>
            <person name="Kapatral V."/>
            <person name="Walunas T.L."/>
            <person name="Crosson S."/>
        </authorList>
    </citation>
    <scope>NUCLEOTIDE SEQUENCE [LARGE SCALE GENOMIC DNA]</scope>
    <source>
        <strain>NA1000 / CB15N</strain>
    </source>
</reference>
<comment type="function">
    <text evidence="1">Major role in the synthesis of nucleoside triphosphates other than ATP. The ATP gamma phosphate is transferred to the NDP beta phosphate via a ping-pong mechanism, using a phosphorylated active-site intermediate.</text>
</comment>
<comment type="catalytic activity">
    <reaction evidence="1">
        <text>a 2'-deoxyribonucleoside 5'-diphosphate + ATP = a 2'-deoxyribonucleoside 5'-triphosphate + ADP</text>
        <dbReference type="Rhea" id="RHEA:44640"/>
        <dbReference type="ChEBI" id="CHEBI:30616"/>
        <dbReference type="ChEBI" id="CHEBI:61560"/>
        <dbReference type="ChEBI" id="CHEBI:73316"/>
        <dbReference type="ChEBI" id="CHEBI:456216"/>
        <dbReference type="EC" id="2.7.4.6"/>
    </reaction>
</comment>
<comment type="catalytic activity">
    <reaction evidence="1">
        <text>a ribonucleoside 5'-diphosphate + ATP = a ribonucleoside 5'-triphosphate + ADP</text>
        <dbReference type="Rhea" id="RHEA:18113"/>
        <dbReference type="ChEBI" id="CHEBI:30616"/>
        <dbReference type="ChEBI" id="CHEBI:57930"/>
        <dbReference type="ChEBI" id="CHEBI:61557"/>
        <dbReference type="ChEBI" id="CHEBI:456216"/>
        <dbReference type="EC" id="2.7.4.6"/>
    </reaction>
</comment>
<comment type="cofactor">
    <cofactor evidence="1">
        <name>Mg(2+)</name>
        <dbReference type="ChEBI" id="CHEBI:18420"/>
    </cofactor>
</comment>
<comment type="subunit">
    <text evidence="1">Homotetramer.</text>
</comment>
<comment type="subcellular location">
    <subcellularLocation>
        <location evidence="1">Cytoplasm</location>
    </subcellularLocation>
</comment>
<comment type="similarity">
    <text evidence="1">Belongs to the NDK family.</text>
</comment>
<protein>
    <recommendedName>
        <fullName evidence="1">Nucleoside diphosphate kinase</fullName>
        <shortName evidence="1">NDK</shortName>
        <shortName evidence="1">NDP kinase</shortName>
        <ecNumber evidence="1">2.7.4.6</ecNumber>
    </recommendedName>
    <alternativeName>
        <fullName evidence="1">Nucleoside-2-P kinase</fullName>
    </alternativeName>
</protein>
<proteinExistence type="inferred from homology"/>
<organism>
    <name type="scientific">Caulobacter vibrioides (strain NA1000 / CB15N)</name>
    <name type="common">Caulobacter crescentus</name>
    <dbReference type="NCBI Taxonomy" id="565050"/>
    <lineage>
        <taxon>Bacteria</taxon>
        <taxon>Pseudomonadati</taxon>
        <taxon>Pseudomonadota</taxon>
        <taxon>Alphaproteobacteria</taxon>
        <taxon>Caulobacterales</taxon>
        <taxon>Caulobacteraceae</taxon>
        <taxon>Caulobacter</taxon>
    </lineage>
</organism>
<sequence length="139" mass="15250">MTERTFSIIKPDATRRNLTGAINAVIEAAGLRIVAQRRVKLTEAQAKKFYEVHAERPFYGELVGQMTAEPVVVQVLQGDNAVLKYREVMGATNPENADEGTIRKLFALSIGENSVHGSDSLENAGIEIAQFFTEDEIVG</sequence>
<dbReference type="EC" id="2.7.4.6" evidence="1"/>
<dbReference type="EMBL" id="CP001340">
    <property type="protein sequence ID" value="ACL95235.1"/>
    <property type="molecule type" value="Genomic_DNA"/>
</dbReference>
<dbReference type="RefSeq" id="WP_010919569.1">
    <property type="nucleotide sequence ID" value="NC_011916.1"/>
</dbReference>
<dbReference type="RefSeq" id="YP_002517143.1">
    <property type="nucleotide sequence ID" value="NC_011916.1"/>
</dbReference>
<dbReference type="SMR" id="B8GW43"/>
<dbReference type="GeneID" id="7331235"/>
<dbReference type="KEGG" id="ccs:CCNA_01770"/>
<dbReference type="PATRIC" id="fig|565050.3.peg.1746"/>
<dbReference type="HOGENOM" id="CLU_060216_8_1_5"/>
<dbReference type="OrthoDB" id="9801161at2"/>
<dbReference type="PhylomeDB" id="B8GW43"/>
<dbReference type="Proteomes" id="UP000001364">
    <property type="component" value="Chromosome"/>
</dbReference>
<dbReference type="GO" id="GO:0005737">
    <property type="term" value="C:cytoplasm"/>
    <property type="evidence" value="ECO:0007669"/>
    <property type="project" value="UniProtKB-SubCell"/>
</dbReference>
<dbReference type="GO" id="GO:0005524">
    <property type="term" value="F:ATP binding"/>
    <property type="evidence" value="ECO:0007669"/>
    <property type="project" value="UniProtKB-UniRule"/>
</dbReference>
<dbReference type="GO" id="GO:0046872">
    <property type="term" value="F:metal ion binding"/>
    <property type="evidence" value="ECO:0007669"/>
    <property type="project" value="UniProtKB-KW"/>
</dbReference>
<dbReference type="GO" id="GO:0004550">
    <property type="term" value="F:nucleoside diphosphate kinase activity"/>
    <property type="evidence" value="ECO:0007669"/>
    <property type="project" value="UniProtKB-UniRule"/>
</dbReference>
<dbReference type="GO" id="GO:0006241">
    <property type="term" value="P:CTP biosynthetic process"/>
    <property type="evidence" value="ECO:0007669"/>
    <property type="project" value="UniProtKB-UniRule"/>
</dbReference>
<dbReference type="GO" id="GO:0006183">
    <property type="term" value="P:GTP biosynthetic process"/>
    <property type="evidence" value="ECO:0007669"/>
    <property type="project" value="UniProtKB-UniRule"/>
</dbReference>
<dbReference type="GO" id="GO:0006228">
    <property type="term" value="P:UTP biosynthetic process"/>
    <property type="evidence" value="ECO:0007669"/>
    <property type="project" value="UniProtKB-UniRule"/>
</dbReference>
<dbReference type="CDD" id="cd04413">
    <property type="entry name" value="NDPk_I"/>
    <property type="match status" value="1"/>
</dbReference>
<dbReference type="FunFam" id="3.30.70.141:FF:000017">
    <property type="entry name" value="Nucleoside diphosphate kinase"/>
    <property type="match status" value="1"/>
</dbReference>
<dbReference type="Gene3D" id="3.30.70.141">
    <property type="entry name" value="Nucleoside diphosphate kinase-like domain"/>
    <property type="match status" value="1"/>
</dbReference>
<dbReference type="HAMAP" id="MF_00451">
    <property type="entry name" value="NDP_kinase"/>
    <property type="match status" value="1"/>
</dbReference>
<dbReference type="InterPro" id="IPR034907">
    <property type="entry name" value="NDK-like_dom"/>
</dbReference>
<dbReference type="InterPro" id="IPR036850">
    <property type="entry name" value="NDK-like_dom_sf"/>
</dbReference>
<dbReference type="InterPro" id="IPR001564">
    <property type="entry name" value="Nucleoside_diP_kinase"/>
</dbReference>
<dbReference type="InterPro" id="IPR023005">
    <property type="entry name" value="Nucleoside_diP_kinase_AS"/>
</dbReference>
<dbReference type="NCBIfam" id="NF001908">
    <property type="entry name" value="PRK00668.1"/>
    <property type="match status" value="1"/>
</dbReference>
<dbReference type="PANTHER" id="PTHR46161">
    <property type="entry name" value="NUCLEOSIDE DIPHOSPHATE KINASE"/>
    <property type="match status" value="1"/>
</dbReference>
<dbReference type="PANTHER" id="PTHR46161:SF3">
    <property type="entry name" value="NUCLEOSIDE DIPHOSPHATE KINASE DDB_G0292928-RELATED"/>
    <property type="match status" value="1"/>
</dbReference>
<dbReference type="Pfam" id="PF00334">
    <property type="entry name" value="NDK"/>
    <property type="match status" value="1"/>
</dbReference>
<dbReference type="PRINTS" id="PR01243">
    <property type="entry name" value="NUCDPKINASE"/>
</dbReference>
<dbReference type="SMART" id="SM00562">
    <property type="entry name" value="NDK"/>
    <property type="match status" value="1"/>
</dbReference>
<dbReference type="SUPFAM" id="SSF54919">
    <property type="entry name" value="Nucleoside diphosphate kinase, NDK"/>
    <property type="match status" value="1"/>
</dbReference>
<dbReference type="PROSITE" id="PS00469">
    <property type="entry name" value="NDPK"/>
    <property type="match status" value="1"/>
</dbReference>
<dbReference type="PROSITE" id="PS51374">
    <property type="entry name" value="NDPK_LIKE"/>
    <property type="match status" value="1"/>
</dbReference>
<gene>
    <name evidence="1" type="primary">ndk</name>
    <name type="ordered locus">CCNA_01770</name>
</gene>
<evidence type="ECO:0000255" key="1">
    <source>
        <dbReference type="HAMAP-Rule" id="MF_00451"/>
    </source>
</evidence>
<name>NDK_CAUVN</name>
<accession>B8GW43</accession>
<feature type="chain" id="PRO_1000135244" description="Nucleoside diphosphate kinase">
    <location>
        <begin position="1"/>
        <end position="139"/>
    </location>
</feature>
<feature type="active site" description="Pros-phosphohistidine intermediate" evidence="1">
    <location>
        <position position="116"/>
    </location>
</feature>
<feature type="binding site" evidence="1">
    <location>
        <position position="10"/>
    </location>
    <ligand>
        <name>ATP</name>
        <dbReference type="ChEBI" id="CHEBI:30616"/>
    </ligand>
</feature>
<feature type="binding site" evidence="1">
    <location>
        <position position="58"/>
    </location>
    <ligand>
        <name>ATP</name>
        <dbReference type="ChEBI" id="CHEBI:30616"/>
    </ligand>
</feature>
<feature type="binding site" evidence="1">
    <location>
        <position position="86"/>
    </location>
    <ligand>
        <name>ATP</name>
        <dbReference type="ChEBI" id="CHEBI:30616"/>
    </ligand>
</feature>
<feature type="binding site" evidence="1">
    <location>
        <position position="92"/>
    </location>
    <ligand>
        <name>ATP</name>
        <dbReference type="ChEBI" id="CHEBI:30616"/>
    </ligand>
</feature>
<feature type="binding site" evidence="1">
    <location>
        <position position="103"/>
    </location>
    <ligand>
        <name>ATP</name>
        <dbReference type="ChEBI" id="CHEBI:30616"/>
    </ligand>
</feature>
<feature type="binding site" evidence="1">
    <location>
        <position position="113"/>
    </location>
    <ligand>
        <name>ATP</name>
        <dbReference type="ChEBI" id="CHEBI:30616"/>
    </ligand>
</feature>